<dbReference type="EMBL" id="AF007268">
    <property type="protein sequence ID" value="AAB63197.1"/>
    <property type="molecule type" value="mRNA"/>
</dbReference>
<dbReference type="EMBL" id="AK017829">
    <property type="protein sequence ID" value="BAB30961.1"/>
    <property type="molecule type" value="mRNA"/>
</dbReference>
<dbReference type="EMBL" id="BC021328">
    <property type="protein sequence ID" value="AAH21328.1"/>
    <property type="molecule type" value="mRNA"/>
</dbReference>
<dbReference type="CCDS" id="CCDS22053.1"/>
<dbReference type="RefSeq" id="NP_032029.1">
    <property type="nucleotide sequence ID" value="NM_008003.2"/>
</dbReference>
<dbReference type="SMR" id="O35622"/>
<dbReference type="FunCoup" id="O35622">
    <property type="interactions" value="978"/>
</dbReference>
<dbReference type="STRING" id="10090.ENSMUSP00000033389"/>
<dbReference type="PhosphoSitePlus" id="O35622"/>
<dbReference type="PaxDb" id="10090-ENSMUSP00000033389"/>
<dbReference type="Antibodypedia" id="30654">
    <property type="antibodies" value="447 antibodies from 35 providers"/>
</dbReference>
<dbReference type="DNASU" id="14170"/>
<dbReference type="Ensembl" id="ENSMUST00000033389.7">
    <property type="protein sequence ID" value="ENSMUSP00000033389.6"/>
    <property type="gene ID" value="ENSMUSG00000031073.7"/>
</dbReference>
<dbReference type="GeneID" id="14170"/>
<dbReference type="KEGG" id="mmu:14170"/>
<dbReference type="UCSC" id="uc009kqr.1">
    <property type="organism name" value="mouse"/>
</dbReference>
<dbReference type="AGR" id="MGI:1096383"/>
<dbReference type="CTD" id="14170"/>
<dbReference type="MGI" id="MGI:1096383">
    <property type="gene designation" value="Fgf15"/>
</dbReference>
<dbReference type="VEuPathDB" id="HostDB:ENSMUSG00000031073"/>
<dbReference type="eggNOG" id="KOG3885">
    <property type="taxonomic scope" value="Eukaryota"/>
</dbReference>
<dbReference type="GeneTree" id="ENSGT00940000160601"/>
<dbReference type="HOGENOM" id="CLU_094251_1_0_1"/>
<dbReference type="InParanoid" id="O35622"/>
<dbReference type="OMA" id="HVTHGWG"/>
<dbReference type="OrthoDB" id="9937370at2759"/>
<dbReference type="PhylomeDB" id="O35622"/>
<dbReference type="TreeFam" id="TF335872"/>
<dbReference type="Reactome" id="R-MMU-109704">
    <property type="pathway name" value="PI3K Cascade"/>
</dbReference>
<dbReference type="Reactome" id="R-MMU-1257604">
    <property type="pathway name" value="PIP3 activates AKT signaling"/>
</dbReference>
<dbReference type="Reactome" id="R-MMU-1307965">
    <property type="pathway name" value="betaKlotho-mediated ligand binding"/>
</dbReference>
<dbReference type="Reactome" id="R-MMU-190322">
    <property type="pathway name" value="FGFR4 ligand binding and activation"/>
</dbReference>
<dbReference type="Reactome" id="R-MMU-5654228">
    <property type="pathway name" value="Phospholipase C-mediated cascade, FGFR4"/>
</dbReference>
<dbReference type="Reactome" id="R-MMU-5654712">
    <property type="pathway name" value="FRS-mediated FGFR4 signaling"/>
</dbReference>
<dbReference type="Reactome" id="R-MMU-5654719">
    <property type="pathway name" value="SHC-mediated cascade:FGFR4"/>
</dbReference>
<dbReference type="Reactome" id="R-MMU-5654720">
    <property type="pathway name" value="PI-3K cascade:FGFR4"/>
</dbReference>
<dbReference type="Reactome" id="R-MMU-5654733">
    <property type="pathway name" value="Negative regulation of FGFR4 signaling"/>
</dbReference>
<dbReference type="Reactome" id="R-MMU-5673001">
    <property type="pathway name" value="RAF/MAP kinase cascade"/>
</dbReference>
<dbReference type="Reactome" id="R-MMU-6811558">
    <property type="pathway name" value="PI5P, PP2A and IER3 Regulate PI3K/AKT Signaling"/>
</dbReference>
<dbReference type="BioGRID-ORCS" id="14170">
    <property type="hits" value="3 hits in 80 CRISPR screens"/>
</dbReference>
<dbReference type="ChiTaRS" id="Fgf15">
    <property type="organism name" value="mouse"/>
</dbReference>
<dbReference type="PRO" id="PR:O35622"/>
<dbReference type="Proteomes" id="UP000000589">
    <property type="component" value="Chromosome 7"/>
</dbReference>
<dbReference type="RNAct" id="O35622">
    <property type="molecule type" value="protein"/>
</dbReference>
<dbReference type="Bgee" id="ENSMUSG00000031073">
    <property type="expression patterns" value="Expressed in roof plate of midbrain and 111 other cell types or tissues"/>
</dbReference>
<dbReference type="ExpressionAtlas" id="O35622">
    <property type="expression patterns" value="baseline and differential"/>
</dbReference>
<dbReference type="GO" id="GO:0005576">
    <property type="term" value="C:extracellular region"/>
    <property type="evidence" value="ECO:0007669"/>
    <property type="project" value="UniProtKB-SubCell"/>
</dbReference>
<dbReference type="GO" id="GO:0005104">
    <property type="term" value="F:fibroblast growth factor receptor binding"/>
    <property type="evidence" value="ECO:0000266"/>
    <property type="project" value="MGI"/>
</dbReference>
<dbReference type="GO" id="GO:0008083">
    <property type="term" value="F:growth factor activity"/>
    <property type="evidence" value="ECO:0007669"/>
    <property type="project" value="UniProtKB-KW"/>
</dbReference>
<dbReference type="GO" id="GO:0015721">
    <property type="term" value="P:bile acid and bile salt transport"/>
    <property type="evidence" value="ECO:0007669"/>
    <property type="project" value="Ensembl"/>
</dbReference>
<dbReference type="GO" id="GO:0008543">
    <property type="term" value="P:fibroblast growth factor receptor signaling pathway"/>
    <property type="evidence" value="ECO:0000266"/>
    <property type="project" value="MGI"/>
</dbReference>
<dbReference type="GO" id="GO:0007507">
    <property type="term" value="P:heart development"/>
    <property type="evidence" value="ECO:0000315"/>
    <property type="project" value="MGI"/>
</dbReference>
<dbReference type="GO" id="GO:0070858">
    <property type="term" value="P:negative regulation of bile acid biosynthetic process"/>
    <property type="evidence" value="ECO:0000316"/>
    <property type="project" value="MGI"/>
</dbReference>
<dbReference type="GO" id="GO:0010629">
    <property type="term" value="P:negative regulation of gene expression"/>
    <property type="evidence" value="ECO:0007669"/>
    <property type="project" value="Ensembl"/>
</dbReference>
<dbReference type="GO" id="GO:0001755">
    <property type="term" value="P:neural crest cell migration"/>
    <property type="evidence" value="ECO:0000315"/>
    <property type="project" value="MGI"/>
</dbReference>
<dbReference type="GO" id="GO:0008284">
    <property type="term" value="P:positive regulation of cell population proliferation"/>
    <property type="evidence" value="ECO:0000266"/>
    <property type="project" value="MGI"/>
</dbReference>
<dbReference type="GO" id="GO:0046326">
    <property type="term" value="P:positive regulation of D-glucose import"/>
    <property type="evidence" value="ECO:0007669"/>
    <property type="project" value="Ensembl"/>
</dbReference>
<dbReference type="GO" id="GO:0070374">
    <property type="term" value="P:positive regulation of ERK1 and ERK2 cascade"/>
    <property type="evidence" value="ECO:0007669"/>
    <property type="project" value="Ensembl"/>
</dbReference>
<dbReference type="GO" id="GO:0046330">
    <property type="term" value="P:positive regulation of JNK cascade"/>
    <property type="evidence" value="ECO:0007669"/>
    <property type="project" value="Ensembl"/>
</dbReference>
<dbReference type="GO" id="GO:0009617">
    <property type="term" value="P:response to bacterium"/>
    <property type="evidence" value="ECO:0000270"/>
    <property type="project" value="MGI"/>
</dbReference>
<dbReference type="GO" id="GO:0045471">
    <property type="term" value="P:response to ethanol"/>
    <property type="evidence" value="ECO:0007669"/>
    <property type="project" value="Ensembl"/>
</dbReference>
<dbReference type="CDD" id="cd23331">
    <property type="entry name" value="beta-trefoil_FGF19"/>
    <property type="match status" value="1"/>
</dbReference>
<dbReference type="FunFam" id="2.80.10.50:FF:000053">
    <property type="entry name" value="Fibroblast growth factor"/>
    <property type="match status" value="1"/>
</dbReference>
<dbReference type="Gene3D" id="2.80.10.50">
    <property type="match status" value="1"/>
</dbReference>
<dbReference type="InterPro" id="IPR035444">
    <property type="entry name" value="FGF15/19/21"/>
</dbReference>
<dbReference type="InterPro" id="IPR002209">
    <property type="entry name" value="Fibroblast_GF_fam"/>
</dbReference>
<dbReference type="InterPro" id="IPR008996">
    <property type="entry name" value="IL1/FGF"/>
</dbReference>
<dbReference type="PANTHER" id="PTHR11486">
    <property type="entry name" value="FIBROBLAST GROWTH FACTOR"/>
    <property type="match status" value="1"/>
</dbReference>
<dbReference type="Pfam" id="PF00167">
    <property type="entry name" value="FGF"/>
    <property type="match status" value="1"/>
</dbReference>
<dbReference type="PIRSF" id="PIRSF037961">
    <property type="entry name" value="FGF-19_FGF-21"/>
    <property type="match status" value="1"/>
</dbReference>
<dbReference type="PRINTS" id="PR00262">
    <property type="entry name" value="IL1HBGF"/>
</dbReference>
<dbReference type="SMART" id="SM00442">
    <property type="entry name" value="FGF"/>
    <property type="match status" value="1"/>
</dbReference>
<dbReference type="SUPFAM" id="SSF50353">
    <property type="entry name" value="Cytokine"/>
    <property type="match status" value="1"/>
</dbReference>
<dbReference type="PROSITE" id="PS00247">
    <property type="entry name" value="HBGF_FGF"/>
    <property type="match status" value="1"/>
</dbReference>
<sequence>MARKWNGRAVARALVLATLWLAVSGRPLAQQSQSVSDEDPLFLYGWGKITRLQYLYSAGPYVSNCFLRIRSDGSVDCEEDQNERNLLEFRAVALKTIAIKDVSSVRYLCMSADGKIYGLIRYSEEDCTFREEMDCLGYNQYRSMKHHLHIIFIQAKPREQLQDQKPSNFIPVFHRSFFETGDQLRSKMFSLPLESDSMDPFRMVEDVDHLVKSPSFQK</sequence>
<evidence type="ECO:0000255" key="1"/>
<evidence type="ECO:0000269" key="2">
    <source>
    </source>
</evidence>
<evidence type="ECO:0000269" key="3">
    <source>
    </source>
</evidence>
<evidence type="ECO:0000305" key="4"/>
<feature type="signal peptide" evidence="1">
    <location>
        <begin position="1"/>
        <end position="25"/>
    </location>
</feature>
<feature type="chain" id="PRO_0000008984" description="Fibroblast growth factor 15">
    <location>
        <begin position="26"/>
        <end position="218"/>
    </location>
</feature>
<name>FGF15_MOUSE</name>
<gene>
    <name type="primary">Fgf15</name>
</gene>
<comment type="function">
    <text evidence="2 3">Involved in the suppression of bile acid biosynthesis through down-regulation of CYP7A1 expression.</text>
</comment>
<comment type="subunit">
    <text evidence="3">Interacts with MALRD1.</text>
</comment>
<comment type="subcellular location">
    <subcellularLocation>
        <location>Secreted</location>
    </subcellularLocation>
</comment>
<comment type="tissue specificity">
    <text>Expressed in the developing brain.</text>
</comment>
<comment type="similarity">
    <text evidence="4">Belongs to the heparin-binding growth factors family.</text>
</comment>
<proteinExistence type="evidence at protein level"/>
<reference key="1">
    <citation type="journal article" date="1997" name="Development">
        <title>A novel fibroblast growth factor gene expressed in the developing nervous system is a downstream target of the chimeric homeodomain oncoprotein E2A-Pbx1.</title>
        <authorList>
            <person name="McWhirter J.R."/>
            <person name="Goulding M."/>
            <person name="Weiner J.A."/>
            <person name="Chun J."/>
            <person name="Murre C."/>
        </authorList>
    </citation>
    <scope>NUCLEOTIDE SEQUENCE [MRNA]</scope>
</reference>
<reference key="2">
    <citation type="journal article" date="2005" name="Science">
        <title>The transcriptional landscape of the mammalian genome.</title>
        <authorList>
            <person name="Carninci P."/>
            <person name="Kasukawa T."/>
            <person name="Katayama S."/>
            <person name="Gough J."/>
            <person name="Frith M.C."/>
            <person name="Maeda N."/>
            <person name="Oyama R."/>
            <person name="Ravasi T."/>
            <person name="Lenhard B."/>
            <person name="Wells C."/>
            <person name="Kodzius R."/>
            <person name="Shimokawa K."/>
            <person name="Bajic V.B."/>
            <person name="Brenner S.E."/>
            <person name="Batalov S."/>
            <person name="Forrest A.R."/>
            <person name="Zavolan M."/>
            <person name="Davis M.J."/>
            <person name="Wilming L.G."/>
            <person name="Aidinis V."/>
            <person name="Allen J.E."/>
            <person name="Ambesi-Impiombato A."/>
            <person name="Apweiler R."/>
            <person name="Aturaliya R.N."/>
            <person name="Bailey T.L."/>
            <person name="Bansal M."/>
            <person name="Baxter L."/>
            <person name="Beisel K.W."/>
            <person name="Bersano T."/>
            <person name="Bono H."/>
            <person name="Chalk A.M."/>
            <person name="Chiu K.P."/>
            <person name="Choudhary V."/>
            <person name="Christoffels A."/>
            <person name="Clutterbuck D.R."/>
            <person name="Crowe M.L."/>
            <person name="Dalla E."/>
            <person name="Dalrymple B.P."/>
            <person name="de Bono B."/>
            <person name="Della Gatta G."/>
            <person name="di Bernardo D."/>
            <person name="Down T."/>
            <person name="Engstrom P."/>
            <person name="Fagiolini M."/>
            <person name="Faulkner G."/>
            <person name="Fletcher C.F."/>
            <person name="Fukushima T."/>
            <person name="Furuno M."/>
            <person name="Futaki S."/>
            <person name="Gariboldi M."/>
            <person name="Georgii-Hemming P."/>
            <person name="Gingeras T.R."/>
            <person name="Gojobori T."/>
            <person name="Green R.E."/>
            <person name="Gustincich S."/>
            <person name="Harbers M."/>
            <person name="Hayashi Y."/>
            <person name="Hensch T.K."/>
            <person name="Hirokawa N."/>
            <person name="Hill D."/>
            <person name="Huminiecki L."/>
            <person name="Iacono M."/>
            <person name="Ikeo K."/>
            <person name="Iwama A."/>
            <person name="Ishikawa T."/>
            <person name="Jakt M."/>
            <person name="Kanapin A."/>
            <person name="Katoh M."/>
            <person name="Kawasawa Y."/>
            <person name="Kelso J."/>
            <person name="Kitamura H."/>
            <person name="Kitano H."/>
            <person name="Kollias G."/>
            <person name="Krishnan S.P."/>
            <person name="Kruger A."/>
            <person name="Kummerfeld S.K."/>
            <person name="Kurochkin I.V."/>
            <person name="Lareau L.F."/>
            <person name="Lazarevic D."/>
            <person name="Lipovich L."/>
            <person name="Liu J."/>
            <person name="Liuni S."/>
            <person name="McWilliam S."/>
            <person name="Madan Babu M."/>
            <person name="Madera M."/>
            <person name="Marchionni L."/>
            <person name="Matsuda H."/>
            <person name="Matsuzawa S."/>
            <person name="Miki H."/>
            <person name="Mignone F."/>
            <person name="Miyake S."/>
            <person name="Morris K."/>
            <person name="Mottagui-Tabar S."/>
            <person name="Mulder N."/>
            <person name="Nakano N."/>
            <person name="Nakauchi H."/>
            <person name="Ng P."/>
            <person name="Nilsson R."/>
            <person name="Nishiguchi S."/>
            <person name="Nishikawa S."/>
            <person name="Nori F."/>
            <person name="Ohara O."/>
            <person name="Okazaki Y."/>
            <person name="Orlando V."/>
            <person name="Pang K.C."/>
            <person name="Pavan W.J."/>
            <person name="Pavesi G."/>
            <person name="Pesole G."/>
            <person name="Petrovsky N."/>
            <person name="Piazza S."/>
            <person name="Reed J."/>
            <person name="Reid J.F."/>
            <person name="Ring B.Z."/>
            <person name="Ringwald M."/>
            <person name="Rost B."/>
            <person name="Ruan Y."/>
            <person name="Salzberg S.L."/>
            <person name="Sandelin A."/>
            <person name="Schneider C."/>
            <person name="Schoenbach C."/>
            <person name="Sekiguchi K."/>
            <person name="Semple C.A."/>
            <person name="Seno S."/>
            <person name="Sessa L."/>
            <person name="Sheng Y."/>
            <person name="Shibata Y."/>
            <person name="Shimada H."/>
            <person name="Shimada K."/>
            <person name="Silva D."/>
            <person name="Sinclair B."/>
            <person name="Sperling S."/>
            <person name="Stupka E."/>
            <person name="Sugiura K."/>
            <person name="Sultana R."/>
            <person name="Takenaka Y."/>
            <person name="Taki K."/>
            <person name="Tammoja K."/>
            <person name="Tan S.L."/>
            <person name="Tang S."/>
            <person name="Taylor M.S."/>
            <person name="Tegner J."/>
            <person name="Teichmann S.A."/>
            <person name="Ueda H.R."/>
            <person name="van Nimwegen E."/>
            <person name="Verardo R."/>
            <person name="Wei C.L."/>
            <person name="Yagi K."/>
            <person name="Yamanishi H."/>
            <person name="Zabarovsky E."/>
            <person name="Zhu S."/>
            <person name="Zimmer A."/>
            <person name="Hide W."/>
            <person name="Bult C."/>
            <person name="Grimmond S.M."/>
            <person name="Teasdale R.D."/>
            <person name="Liu E.T."/>
            <person name="Brusic V."/>
            <person name="Quackenbush J."/>
            <person name="Wahlestedt C."/>
            <person name="Mattick J.S."/>
            <person name="Hume D.A."/>
            <person name="Kai C."/>
            <person name="Sasaki D."/>
            <person name="Tomaru Y."/>
            <person name="Fukuda S."/>
            <person name="Kanamori-Katayama M."/>
            <person name="Suzuki M."/>
            <person name="Aoki J."/>
            <person name="Arakawa T."/>
            <person name="Iida J."/>
            <person name="Imamura K."/>
            <person name="Itoh M."/>
            <person name="Kato T."/>
            <person name="Kawaji H."/>
            <person name="Kawagashira N."/>
            <person name="Kawashima T."/>
            <person name="Kojima M."/>
            <person name="Kondo S."/>
            <person name="Konno H."/>
            <person name="Nakano K."/>
            <person name="Ninomiya N."/>
            <person name="Nishio T."/>
            <person name="Okada M."/>
            <person name="Plessy C."/>
            <person name="Shibata K."/>
            <person name="Shiraki T."/>
            <person name="Suzuki S."/>
            <person name="Tagami M."/>
            <person name="Waki K."/>
            <person name="Watahiki A."/>
            <person name="Okamura-Oho Y."/>
            <person name="Suzuki H."/>
            <person name="Kawai J."/>
            <person name="Hayashizaki Y."/>
        </authorList>
    </citation>
    <scope>NUCLEOTIDE SEQUENCE [LARGE SCALE MRNA]</scope>
    <source>
        <strain>C57BL/6J</strain>
    </source>
</reference>
<reference key="3">
    <citation type="journal article" date="2004" name="Genome Res.">
        <title>The status, quality, and expansion of the NIH full-length cDNA project: the Mammalian Gene Collection (MGC).</title>
        <authorList>
            <consortium name="The MGC Project Team"/>
        </authorList>
    </citation>
    <scope>NUCLEOTIDE SEQUENCE [LARGE SCALE MRNA]</scope>
</reference>
<reference key="4">
    <citation type="journal article" date="2005" name="Cell Metab.">
        <title>Fibroblast growth factor 15 functions as an enterohepatic signal to regulate bile acid homeostasis.</title>
        <authorList>
            <person name="Inagaki T."/>
            <person name="Choi M."/>
            <person name="Moschetta A."/>
            <person name="Peng L."/>
            <person name="Cummins C.L."/>
            <person name="McDonald J.G."/>
            <person name="Luo G."/>
            <person name="Jones S.A."/>
            <person name="Goodwin B."/>
            <person name="Richardson J.A."/>
            <person name="Gerard R.D."/>
            <person name="Repa J.J."/>
            <person name="Mangelsdorf D.J."/>
            <person name="Kliewer S.A."/>
        </authorList>
    </citation>
    <scope>FUNCTION</scope>
</reference>
<reference key="5">
    <citation type="journal article" date="2013" name="Cell Metab.">
        <title>Diet1 functions in the FGF15/19 enterohepatic signaling axis to modulate bile acid and lipid levels.</title>
        <authorList>
            <person name="Vergnes L."/>
            <person name="Lee J.M."/>
            <person name="Chin R.G."/>
            <person name="Auwerx J."/>
            <person name="Reue K."/>
        </authorList>
    </citation>
    <scope>FUNCTION</scope>
    <scope>INTERACTION WITH MALRD1</scope>
</reference>
<protein>
    <recommendedName>
        <fullName>Fibroblast growth factor 15</fullName>
        <shortName>FGF-15</shortName>
    </recommendedName>
</protein>
<keyword id="KW-0339">Growth factor</keyword>
<keyword id="KW-1185">Reference proteome</keyword>
<keyword id="KW-0964">Secreted</keyword>
<keyword id="KW-0732">Signal</keyword>
<accession>O35622</accession>
<organism>
    <name type="scientific">Mus musculus</name>
    <name type="common">Mouse</name>
    <dbReference type="NCBI Taxonomy" id="10090"/>
    <lineage>
        <taxon>Eukaryota</taxon>
        <taxon>Metazoa</taxon>
        <taxon>Chordata</taxon>
        <taxon>Craniata</taxon>
        <taxon>Vertebrata</taxon>
        <taxon>Euteleostomi</taxon>
        <taxon>Mammalia</taxon>
        <taxon>Eutheria</taxon>
        <taxon>Euarchontoglires</taxon>
        <taxon>Glires</taxon>
        <taxon>Rodentia</taxon>
        <taxon>Myomorpha</taxon>
        <taxon>Muroidea</taxon>
        <taxon>Muridae</taxon>
        <taxon>Murinae</taxon>
        <taxon>Mus</taxon>
        <taxon>Mus</taxon>
    </lineage>
</organism>